<reference key="1">
    <citation type="journal article" date="2015" name="Genome Announc.">
        <title>Complete Genome Sequence of Methanosphaerula palustris E1-9CT, a Hydrogenotrophic Methanogen Isolated from a Minerotrophic Fen Peatland.</title>
        <authorList>
            <person name="Cadillo-Quiroz H."/>
            <person name="Browne P."/>
            <person name="Kyrpides N."/>
            <person name="Woyke T."/>
            <person name="Goodwin L."/>
            <person name="Detter C."/>
            <person name="Yavitt J.B."/>
            <person name="Zinder S.H."/>
        </authorList>
    </citation>
    <scope>NUCLEOTIDE SEQUENCE [LARGE SCALE GENOMIC DNA]</scope>
    <source>
        <strain>ATCC BAA-1556 / DSM 19958 / E1-9c</strain>
    </source>
</reference>
<proteinExistence type="inferred from homology"/>
<accession>B8GF04</accession>
<evidence type="ECO:0000255" key="1">
    <source>
        <dbReference type="HAMAP-Rule" id="MF_00002"/>
    </source>
</evidence>
<feature type="chain" id="PRO_1000193117" description="Aspartate carbamoyltransferase regulatory chain">
    <location>
        <begin position="1"/>
        <end position="155"/>
    </location>
</feature>
<feature type="binding site" evidence="1">
    <location>
        <position position="113"/>
    </location>
    <ligand>
        <name>Zn(2+)</name>
        <dbReference type="ChEBI" id="CHEBI:29105"/>
    </ligand>
</feature>
<feature type="binding site" evidence="1">
    <location>
        <position position="118"/>
    </location>
    <ligand>
        <name>Zn(2+)</name>
        <dbReference type="ChEBI" id="CHEBI:29105"/>
    </ligand>
</feature>
<feature type="binding site" evidence="1">
    <location>
        <position position="139"/>
    </location>
    <ligand>
        <name>Zn(2+)</name>
        <dbReference type="ChEBI" id="CHEBI:29105"/>
    </ligand>
</feature>
<feature type="binding site" evidence="1">
    <location>
        <position position="142"/>
    </location>
    <ligand>
        <name>Zn(2+)</name>
        <dbReference type="ChEBI" id="CHEBI:29105"/>
    </ligand>
</feature>
<name>PYRI_METPE</name>
<organism>
    <name type="scientific">Methanosphaerula palustris (strain ATCC BAA-1556 / DSM 19958 / E1-9c)</name>
    <dbReference type="NCBI Taxonomy" id="521011"/>
    <lineage>
        <taxon>Archaea</taxon>
        <taxon>Methanobacteriati</taxon>
        <taxon>Methanobacteriota</taxon>
        <taxon>Stenosarchaea group</taxon>
        <taxon>Methanomicrobia</taxon>
        <taxon>Methanomicrobiales</taxon>
        <taxon>Methanoregulaceae</taxon>
        <taxon>Methanosphaerula</taxon>
    </lineage>
</organism>
<comment type="function">
    <text evidence="1">Involved in allosteric regulation of aspartate carbamoyltransferase.</text>
</comment>
<comment type="cofactor">
    <cofactor evidence="1">
        <name>Zn(2+)</name>
        <dbReference type="ChEBI" id="CHEBI:29105"/>
    </cofactor>
    <text evidence="1">Binds 1 zinc ion per subunit.</text>
</comment>
<comment type="subunit">
    <text evidence="1">Contains catalytic and regulatory chains.</text>
</comment>
<comment type="similarity">
    <text evidence="1">Belongs to the PyrI family.</text>
</comment>
<gene>
    <name evidence="1" type="primary">pyrI</name>
    <name type="ordered locus">Mpal_2537</name>
</gene>
<sequence length="155" mass="17112">MTDEGLTEGLLISPIRNGTVIDHIKGGEGLNVLRILGLTGTCTVSLSVATNVTSRQMGRKDIVKIENRELLKEEVDRIALIAPQSSINIIREFRVFDKKGVDIPNQICGVIRCPNPGCITNTNEPVTSRFTIQQSGLRCHYCDWLITKDIASHII</sequence>
<dbReference type="EMBL" id="CP001338">
    <property type="protein sequence ID" value="ACL17810.1"/>
    <property type="molecule type" value="Genomic_DNA"/>
</dbReference>
<dbReference type="RefSeq" id="WP_012619129.1">
    <property type="nucleotide sequence ID" value="NC_011832.1"/>
</dbReference>
<dbReference type="SMR" id="B8GF04"/>
<dbReference type="STRING" id="521011.Mpal_2537"/>
<dbReference type="GeneID" id="7271706"/>
<dbReference type="KEGG" id="mpl:Mpal_2537"/>
<dbReference type="eggNOG" id="arCOG04229">
    <property type="taxonomic scope" value="Archaea"/>
</dbReference>
<dbReference type="HOGENOM" id="CLU_128576_0_0_2"/>
<dbReference type="OrthoDB" id="7000at2157"/>
<dbReference type="Proteomes" id="UP000002457">
    <property type="component" value="Chromosome"/>
</dbReference>
<dbReference type="GO" id="GO:0009347">
    <property type="term" value="C:aspartate carbamoyltransferase complex"/>
    <property type="evidence" value="ECO:0007669"/>
    <property type="project" value="InterPro"/>
</dbReference>
<dbReference type="GO" id="GO:0046872">
    <property type="term" value="F:metal ion binding"/>
    <property type="evidence" value="ECO:0007669"/>
    <property type="project" value="UniProtKB-KW"/>
</dbReference>
<dbReference type="GO" id="GO:0006207">
    <property type="term" value="P:'de novo' pyrimidine nucleobase biosynthetic process"/>
    <property type="evidence" value="ECO:0007669"/>
    <property type="project" value="InterPro"/>
</dbReference>
<dbReference type="GO" id="GO:0006221">
    <property type="term" value="P:pyrimidine nucleotide biosynthetic process"/>
    <property type="evidence" value="ECO:0007669"/>
    <property type="project" value="UniProtKB-UniRule"/>
</dbReference>
<dbReference type="Gene3D" id="2.30.30.20">
    <property type="entry name" value="Aspartate carbamoyltransferase regulatory subunit, C-terminal domain"/>
    <property type="match status" value="1"/>
</dbReference>
<dbReference type="Gene3D" id="3.30.70.140">
    <property type="entry name" value="Aspartate carbamoyltransferase regulatory subunit, N-terminal domain"/>
    <property type="match status" value="1"/>
</dbReference>
<dbReference type="HAMAP" id="MF_00002">
    <property type="entry name" value="Asp_carb_tr_reg"/>
    <property type="match status" value="1"/>
</dbReference>
<dbReference type="InterPro" id="IPR020545">
    <property type="entry name" value="Asp_carbamoyltransf_reg_N"/>
</dbReference>
<dbReference type="InterPro" id="IPR002801">
    <property type="entry name" value="Asp_carbamoylTrfase_reg"/>
</dbReference>
<dbReference type="InterPro" id="IPR020542">
    <property type="entry name" value="Asp_carbamoyltrfase_reg_C"/>
</dbReference>
<dbReference type="InterPro" id="IPR036792">
    <property type="entry name" value="Asp_carbatrfase_reg_C_sf"/>
</dbReference>
<dbReference type="InterPro" id="IPR036793">
    <property type="entry name" value="Asp_carbatrfase_reg_N_sf"/>
</dbReference>
<dbReference type="NCBIfam" id="TIGR00240">
    <property type="entry name" value="ATCase_reg"/>
    <property type="match status" value="1"/>
</dbReference>
<dbReference type="PANTHER" id="PTHR35805">
    <property type="entry name" value="ASPARTATE CARBAMOYLTRANSFERASE REGULATORY CHAIN"/>
    <property type="match status" value="1"/>
</dbReference>
<dbReference type="PANTHER" id="PTHR35805:SF1">
    <property type="entry name" value="ASPARTATE CARBAMOYLTRANSFERASE REGULATORY CHAIN"/>
    <property type="match status" value="1"/>
</dbReference>
<dbReference type="Pfam" id="PF01948">
    <property type="entry name" value="PyrI"/>
    <property type="match status" value="1"/>
</dbReference>
<dbReference type="Pfam" id="PF02748">
    <property type="entry name" value="PyrI_C"/>
    <property type="match status" value="1"/>
</dbReference>
<dbReference type="SUPFAM" id="SSF57825">
    <property type="entry name" value="Aspartate carbamoyltransferase, Regulatory-chain, C-terminal domain"/>
    <property type="match status" value="1"/>
</dbReference>
<dbReference type="SUPFAM" id="SSF54893">
    <property type="entry name" value="Aspartate carbamoyltransferase, Regulatory-chain, N-terminal domain"/>
    <property type="match status" value="1"/>
</dbReference>
<keyword id="KW-0479">Metal-binding</keyword>
<keyword id="KW-0665">Pyrimidine biosynthesis</keyword>
<keyword id="KW-1185">Reference proteome</keyword>
<keyword id="KW-0862">Zinc</keyword>
<protein>
    <recommendedName>
        <fullName evidence="1">Aspartate carbamoyltransferase regulatory chain</fullName>
    </recommendedName>
</protein>